<name>GLGA_VIBCM</name>
<keyword id="KW-0320">Glycogen biosynthesis</keyword>
<keyword id="KW-0328">Glycosyltransferase</keyword>
<keyword id="KW-0808">Transferase</keyword>
<evidence type="ECO:0000255" key="1">
    <source>
        <dbReference type="HAMAP-Rule" id="MF_00484"/>
    </source>
</evidence>
<feature type="chain" id="PRO_1000190091" description="Glycogen synthase">
    <location>
        <begin position="1"/>
        <end position="484"/>
    </location>
</feature>
<feature type="binding site" evidence="1">
    <location>
        <position position="18"/>
    </location>
    <ligand>
        <name>ADP-alpha-D-glucose</name>
        <dbReference type="ChEBI" id="CHEBI:57498"/>
    </ligand>
</feature>
<proteinExistence type="inferred from homology"/>
<comment type="function">
    <text evidence="1">Synthesizes alpha-1,4-glucan chains using ADP-glucose.</text>
</comment>
<comment type="catalytic activity">
    <reaction evidence="1">
        <text>[(1-&gt;4)-alpha-D-glucosyl](n) + ADP-alpha-D-glucose = [(1-&gt;4)-alpha-D-glucosyl](n+1) + ADP + H(+)</text>
        <dbReference type="Rhea" id="RHEA:18189"/>
        <dbReference type="Rhea" id="RHEA-COMP:9584"/>
        <dbReference type="Rhea" id="RHEA-COMP:9587"/>
        <dbReference type="ChEBI" id="CHEBI:15378"/>
        <dbReference type="ChEBI" id="CHEBI:15444"/>
        <dbReference type="ChEBI" id="CHEBI:57498"/>
        <dbReference type="ChEBI" id="CHEBI:456216"/>
        <dbReference type="EC" id="2.4.1.21"/>
    </reaction>
</comment>
<comment type="pathway">
    <text evidence="1">Glycan biosynthesis; glycogen biosynthesis.</text>
</comment>
<comment type="similarity">
    <text evidence="1">Belongs to the glycosyltransferase 1 family. Bacterial/plant glycogen synthase subfamily.</text>
</comment>
<reference key="1">
    <citation type="journal article" date="2008" name="PLoS ONE">
        <title>A recalibrated molecular clock and independent origins for the cholera pandemic clones.</title>
        <authorList>
            <person name="Feng L."/>
            <person name="Reeves P.R."/>
            <person name="Lan R."/>
            <person name="Ren Y."/>
            <person name="Gao C."/>
            <person name="Zhou Z."/>
            <person name="Ren Y."/>
            <person name="Cheng J."/>
            <person name="Wang W."/>
            <person name="Wang J."/>
            <person name="Qian W."/>
            <person name="Li D."/>
            <person name="Wang L."/>
        </authorList>
    </citation>
    <scope>NUCLEOTIDE SEQUENCE [LARGE SCALE GENOMIC DNA]</scope>
    <source>
        <strain>M66-2</strain>
    </source>
</reference>
<organism>
    <name type="scientific">Vibrio cholerae serotype O1 (strain M66-2)</name>
    <dbReference type="NCBI Taxonomy" id="579112"/>
    <lineage>
        <taxon>Bacteria</taxon>
        <taxon>Pseudomonadati</taxon>
        <taxon>Pseudomonadota</taxon>
        <taxon>Gammaproteobacteria</taxon>
        <taxon>Vibrionales</taxon>
        <taxon>Vibrionaceae</taxon>
        <taxon>Vibrio</taxon>
    </lineage>
</organism>
<gene>
    <name evidence="1" type="primary">glgA</name>
    <name type="ordered locus">VCM66_1666</name>
</gene>
<dbReference type="EC" id="2.4.1.21" evidence="1"/>
<dbReference type="EMBL" id="CP001233">
    <property type="protein sequence ID" value="ACP05975.1"/>
    <property type="molecule type" value="Genomic_DNA"/>
</dbReference>
<dbReference type="RefSeq" id="WP_000434699.1">
    <property type="nucleotide sequence ID" value="NC_012578.1"/>
</dbReference>
<dbReference type="SMR" id="C3LN49"/>
<dbReference type="CAZy" id="GT5">
    <property type="family name" value="Glycosyltransferase Family 5"/>
</dbReference>
<dbReference type="KEGG" id="vcm:VCM66_1666"/>
<dbReference type="HOGENOM" id="CLU_009583_18_2_6"/>
<dbReference type="UniPathway" id="UPA00164"/>
<dbReference type="Proteomes" id="UP000001217">
    <property type="component" value="Chromosome I"/>
</dbReference>
<dbReference type="GO" id="GO:0005829">
    <property type="term" value="C:cytosol"/>
    <property type="evidence" value="ECO:0007669"/>
    <property type="project" value="TreeGrafter"/>
</dbReference>
<dbReference type="GO" id="GO:0009011">
    <property type="term" value="F:alpha-1,4-glucan glucosyltransferase (ADP-glucose donor) activity"/>
    <property type="evidence" value="ECO:0007669"/>
    <property type="project" value="UniProtKB-UniRule"/>
</dbReference>
<dbReference type="GO" id="GO:0004373">
    <property type="term" value="F:alpha-1,4-glucan glucosyltransferase (UDP-glucose donor) activity"/>
    <property type="evidence" value="ECO:0007669"/>
    <property type="project" value="InterPro"/>
</dbReference>
<dbReference type="GO" id="GO:0005978">
    <property type="term" value="P:glycogen biosynthetic process"/>
    <property type="evidence" value="ECO:0007669"/>
    <property type="project" value="UniProtKB-UniRule"/>
</dbReference>
<dbReference type="CDD" id="cd03791">
    <property type="entry name" value="GT5_Glycogen_synthase_DULL1-like"/>
    <property type="match status" value="1"/>
</dbReference>
<dbReference type="Gene3D" id="3.40.50.2000">
    <property type="entry name" value="Glycogen Phosphorylase B"/>
    <property type="match status" value="2"/>
</dbReference>
<dbReference type="HAMAP" id="MF_00484">
    <property type="entry name" value="Glycogen_synth"/>
    <property type="match status" value="1"/>
</dbReference>
<dbReference type="InterPro" id="IPR001296">
    <property type="entry name" value="Glyco_trans_1"/>
</dbReference>
<dbReference type="InterPro" id="IPR011835">
    <property type="entry name" value="GS/SS"/>
</dbReference>
<dbReference type="InterPro" id="IPR013534">
    <property type="entry name" value="Starch_synth_cat_dom"/>
</dbReference>
<dbReference type="NCBIfam" id="TIGR02095">
    <property type="entry name" value="glgA"/>
    <property type="match status" value="1"/>
</dbReference>
<dbReference type="NCBIfam" id="NF001903">
    <property type="entry name" value="PRK00654.2-2"/>
    <property type="match status" value="1"/>
</dbReference>
<dbReference type="PANTHER" id="PTHR45825:SF11">
    <property type="entry name" value="ALPHA AMYLASE DOMAIN-CONTAINING PROTEIN"/>
    <property type="match status" value="1"/>
</dbReference>
<dbReference type="PANTHER" id="PTHR45825">
    <property type="entry name" value="GRANULE-BOUND STARCH SYNTHASE 1, CHLOROPLASTIC/AMYLOPLASTIC"/>
    <property type="match status" value="1"/>
</dbReference>
<dbReference type="Pfam" id="PF08323">
    <property type="entry name" value="Glyco_transf_5"/>
    <property type="match status" value="1"/>
</dbReference>
<dbReference type="Pfam" id="PF00534">
    <property type="entry name" value="Glycos_transf_1"/>
    <property type="match status" value="1"/>
</dbReference>
<dbReference type="SUPFAM" id="SSF53756">
    <property type="entry name" value="UDP-Glycosyltransferase/glycogen phosphorylase"/>
    <property type="match status" value="1"/>
</dbReference>
<accession>C3LN49</accession>
<protein>
    <recommendedName>
        <fullName evidence="1">Glycogen synthase</fullName>
        <ecNumber evidence="1">2.4.1.21</ecNumber>
    </recommendedName>
    <alternativeName>
        <fullName evidence="1">Starch [bacterial glycogen] synthase</fullName>
    </alternativeName>
</protein>
<sequence>MEQFNVWFTVSEVQGLVKSGGLADVAKALPQALKALHQQVAIALPAYRSVPGKEDAELVLETELTHWPHTQYRVLKRDLDGVPIYLIDCPAYFDRPALYAENNQAYADNGERFGFFSAACLDVLPKLGIQPDIIHANDWHTGLVPFLLKTRYRYDSFFEQVKSVLTVHNAIFKGIFSYHQLEVIPELNLSGMEFLQYGHDHVSMLRAGIAFADKVNAVSPNYAAELLTPLGAHGLVDDFVRRARDLHGIVNGCDYSEWNPRTDHYLPATYSDEPESMRKGKALCKTALQEELHLPVTDVPLFGMVCRLTHQKGFHYLLPILEQFLRNNVQVVIVGTGEPEVAARLNKIAHYHRAKFAFVETYSERLAHWVEAGSDFFLMPSEFEACGLNQIYSMAYGTLPIVREVGGLKDTVNDYDKFPERATGFGYQEPTPEALLITMQRALLFYLQQPEEMLKVQQRAMQQNFSWEESAQEYMKMYRLARFG</sequence>